<name>RS12_PELUB</name>
<proteinExistence type="inferred from homology"/>
<feature type="chain" id="PRO_0000226400" description="Small ribosomal subunit protein uS12">
    <location>
        <begin position="1"/>
        <end position="123"/>
    </location>
</feature>
<feature type="modified residue" description="3-methylthioaspartic acid" evidence="1">
    <location>
        <position position="89"/>
    </location>
</feature>
<dbReference type="EMBL" id="CP000084">
    <property type="protein sequence ID" value="AAZ21924.1"/>
    <property type="molecule type" value="Genomic_DNA"/>
</dbReference>
<dbReference type="RefSeq" id="WP_006996807.1">
    <property type="nucleotide sequence ID" value="NC_007205.1"/>
</dbReference>
<dbReference type="SMR" id="Q4FLL4"/>
<dbReference type="STRING" id="335992.SAR11_1121"/>
<dbReference type="GeneID" id="66295610"/>
<dbReference type="KEGG" id="pub:SAR11_1121"/>
<dbReference type="eggNOG" id="COG0048">
    <property type="taxonomic scope" value="Bacteria"/>
</dbReference>
<dbReference type="HOGENOM" id="CLU_104295_1_2_5"/>
<dbReference type="OrthoDB" id="9802366at2"/>
<dbReference type="Proteomes" id="UP000002528">
    <property type="component" value="Chromosome"/>
</dbReference>
<dbReference type="GO" id="GO:0015935">
    <property type="term" value="C:small ribosomal subunit"/>
    <property type="evidence" value="ECO:0007669"/>
    <property type="project" value="InterPro"/>
</dbReference>
<dbReference type="GO" id="GO:0019843">
    <property type="term" value="F:rRNA binding"/>
    <property type="evidence" value="ECO:0007669"/>
    <property type="project" value="UniProtKB-UniRule"/>
</dbReference>
<dbReference type="GO" id="GO:0003735">
    <property type="term" value="F:structural constituent of ribosome"/>
    <property type="evidence" value="ECO:0007669"/>
    <property type="project" value="InterPro"/>
</dbReference>
<dbReference type="GO" id="GO:0000049">
    <property type="term" value="F:tRNA binding"/>
    <property type="evidence" value="ECO:0007669"/>
    <property type="project" value="UniProtKB-UniRule"/>
</dbReference>
<dbReference type="GO" id="GO:0006412">
    <property type="term" value="P:translation"/>
    <property type="evidence" value="ECO:0007669"/>
    <property type="project" value="UniProtKB-UniRule"/>
</dbReference>
<dbReference type="CDD" id="cd03368">
    <property type="entry name" value="Ribosomal_S12"/>
    <property type="match status" value="1"/>
</dbReference>
<dbReference type="FunFam" id="2.40.50.140:FF:000001">
    <property type="entry name" value="30S ribosomal protein S12"/>
    <property type="match status" value="1"/>
</dbReference>
<dbReference type="Gene3D" id="2.40.50.140">
    <property type="entry name" value="Nucleic acid-binding proteins"/>
    <property type="match status" value="1"/>
</dbReference>
<dbReference type="HAMAP" id="MF_00403_B">
    <property type="entry name" value="Ribosomal_uS12_B"/>
    <property type="match status" value="1"/>
</dbReference>
<dbReference type="InterPro" id="IPR012340">
    <property type="entry name" value="NA-bd_OB-fold"/>
</dbReference>
<dbReference type="InterPro" id="IPR006032">
    <property type="entry name" value="Ribosomal_uS12"/>
</dbReference>
<dbReference type="InterPro" id="IPR005679">
    <property type="entry name" value="Ribosomal_uS12_bac"/>
</dbReference>
<dbReference type="NCBIfam" id="TIGR00981">
    <property type="entry name" value="rpsL_bact"/>
    <property type="match status" value="1"/>
</dbReference>
<dbReference type="PANTHER" id="PTHR11652">
    <property type="entry name" value="30S RIBOSOMAL PROTEIN S12 FAMILY MEMBER"/>
    <property type="match status" value="1"/>
</dbReference>
<dbReference type="Pfam" id="PF00164">
    <property type="entry name" value="Ribosom_S12_S23"/>
    <property type="match status" value="1"/>
</dbReference>
<dbReference type="PIRSF" id="PIRSF002133">
    <property type="entry name" value="Ribosomal_S12/S23"/>
    <property type="match status" value="1"/>
</dbReference>
<dbReference type="PRINTS" id="PR01034">
    <property type="entry name" value="RIBOSOMALS12"/>
</dbReference>
<dbReference type="SUPFAM" id="SSF50249">
    <property type="entry name" value="Nucleic acid-binding proteins"/>
    <property type="match status" value="1"/>
</dbReference>
<dbReference type="PROSITE" id="PS00055">
    <property type="entry name" value="RIBOSOMAL_S12"/>
    <property type="match status" value="1"/>
</dbReference>
<comment type="function">
    <text evidence="2">With S4 and S5 plays an important role in translational accuracy.</text>
</comment>
<comment type="function">
    <text evidence="2">Interacts with and stabilizes bases of the 16S rRNA that are involved in tRNA selection in the A site and with the mRNA backbone. Located at the interface of the 30S and 50S subunits, it traverses the body of the 30S subunit contacting proteins on the other side and probably holding the rRNA structure together. The combined cluster of proteins S8, S12 and S17 appears to hold together the shoulder and platform of the 30S subunit.</text>
</comment>
<comment type="subunit">
    <text evidence="2">Part of the 30S ribosomal subunit. Contacts proteins S8 and S17. May interact with IF1 in the 30S initiation complex.</text>
</comment>
<comment type="similarity">
    <text evidence="2">Belongs to the universal ribosomal protein uS12 family.</text>
</comment>
<keyword id="KW-0488">Methylation</keyword>
<keyword id="KW-1185">Reference proteome</keyword>
<keyword id="KW-0687">Ribonucleoprotein</keyword>
<keyword id="KW-0689">Ribosomal protein</keyword>
<keyword id="KW-0694">RNA-binding</keyword>
<keyword id="KW-0699">rRNA-binding</keyword>
<keyword id="KW-0820">tRNA-binding</keyword>
<gene>
    <name evidence="2" type="primary">rpsL</name>
    <name type="ordered locus">SAR11_1121</name>
</gene>
<protein>
    <recommendedName>
        <fullName evidence="2">Small ribosomal subunit protein uS12</fullName>
    </recommendedName>
    <alternativeName>
        <fullName evidence="3">30S ribosomal protein S12</fullName>
    </alternativeName>
</protein>
<sequence length="123" mass="13817">MPTINQLLRKKRIKPVARNKVPALQKQPLKRGVCVKVYTTTPKKPNSALRKVARVRLSNGFEVTAYIGGEGHNLQEHSVVLIRGGRVKDLPGVRYHILRGNLDTQGVANRKKRRSLYGTKKGK</sequence>
<evidence type="ECO:0000250" key="1"/>
<evidence type="ECO:0000255" key="2">
    <source>
        <dbReference type="HAMAP-Rule" id="MF_00403"/>
    </source>
</evidence>
<evidence type="ECO:0000305" key="3"/>
<accession>Q4FLL4</accession>
<organism>
    <name type="scientific">Pelagibacter ubique (strain HTCC1062)</name>
    <dbReference type="NCBI Taxonomy" id="335992"/>
    <lineage>
        <taxon>Bacteria</taxon>
        <taxon>Pseudomonadati</taxon>
        <taxon>Pseudomonadota</taxon>
        <taxon>Alphaproteobacteria</taxon>
        <taxon>Candidatus Pelagibacterales</taxon>
        <taxon>Candidatus Pelagibacteraceae</taxon>
        <taxon>Candidatus Pelagibacter</taxon>
    </lineage>
</organism>
<reference key="1">
    <citation type="journal article" date="2005" name="Science">
        <title>Genome streamlining in a cosmopolitan oceanic bacterium.</title>
        <authorList>
            <person name="Giovannoni S.J."/>
            <person name="Tripp H.J."/>
            <person name="Givan S."/>
            <person name="Podar M."/>
            <person name="Vergin K.L."/>
            <person name="Baptista D."/>
            <person name="Bibbs L."/>
            <person name="Eads J."/>
            <person name="Richardson T.H."/>
            <person name="Noordewier M."/>
            <person name="Rappe M.S."/>
            <person name="Short J.M."/>
            <person name="Carrington J.C."/>
            <person name="Mathur E.J."/>
        </authorList>
    </citation>
    <scope>NUCLEOTIDE SEQUENCE [LARGE SCALE GENOMIC DNA]</scope>
    <source>
        <strain>HTCC1062</strain>
    </source>
</reference>